<feature type="chain" id="PRO_0000239453" description="Clusterin-associated protein 1">
    <location>
        <begin position="1"/>
        <end position="413"/>
    </location>
</feature>
<feature type="region of interest" description="Disordered" evidence="3">
    <location>
        <begin position="303"/>
        <end position="413"/>
    </location>
</feature>
<feature type="coiled-coil region" evidence="2">
    <location>
        <begin position="185"/>
        <end position="308"/>
    </location>
</feature>
<feature type="compositionally biased region" description="Acidic residues" evidence="3">
    <location>
        <begin position="312"/>
        <end position="328"/>
    </location>
</feature>
<feature type="compositionally biased region" description="Acidic residues" evidence="3">
    <location>
        <begin position="360"/>
        <end position="388"/>
    </location>
</feature>
<feature type="modified residue" description="Phosphoserine" evidence="7">
    <location>
        <position position="314"/>
    </location>
</feature>
<feature type="modified residue" description="Phosphoserine" evidence="7">
    <location>
        <position position="324"/>
    </location>
</feature>
<feature type="modified residue" description="Phosphoserine" evidence="7">
    <location>
        <position position="326"/>
    </location>
</feature>
<feature type="modified residue" description="Phosphoserine" evidence="6 7">
    <location>
        <position position="409"/>
    </location>
</feature>
<dbReference type="EMBL" id="AK134648">
    <property type="protein sequence ID" value="BAE22224.1"/>
    <property type="molecule type" value="mRNA"/>
</dbReference>
<dbReference type="EMBL" id="BC024910">
    <property type="protein sequence ID" value="AAH24910.1"/>
    <property type="molecule type" value="mRNA"/>
</dbReference>
<dbReference type="EMBL" id="BC063769">
    <property type="protein sequence ID" value="AAH63769.1"/>
    <property type="molecule type" value="mRNA"/>
</dbReference>
<dbReference type="CCDS" id="CCDS27912.1"/>
<dbReference type="RefSeq" id="NP_084014.1">
    <property type="nucleotide sequence ID" value="NM_029738.3"/>
</dbReference>
<dbReference type="SMR" id="Q8R3P7"/>
<dbReference type="BioGRID" id="218308">
    <property type="interactions" value="4"/>
</dbReference>
<dbReference type="ComplexPortal" id="CPX-5028">
    <property type="entry name" value="Intraflagellar transport complex B"/>
</dbReference>
<dbReference type="CORUM" id="Q8R3P7"/>
<dbReference type="FunCoup" id="Q8R3P7">
    <property type="interactions" value="1353"/>
</dbReference>
<dbReference type="STRING" id="10090.ENSMUSP00000043397"/>
<dbReference type="iPTMnet" id="Q8R3P7"/>
<dbReference type="PhosphoSitePlus" id="Q8R3P7"/>
<dbReference type="PaxDb" id="10090-ENSMUSP00000043397"/>
<dbReference type="PeptideAtlas" id="Q8R3P7"/>
<dbReference type="ProteomicsDB" id="283386"/>
<dbReference type="Pumba" id="Q8R3P7"/>
<dbReference type="Ensembl" id="ENSMUST00000040881.14">
    <property type="protein sequence ID" value="ENSMUSP00000043397.8"/>
    <property type="gene ID" value="ENSMUSG00000014232.15"/>
</dbReference>
<dbReference type="GeneID" id="76779"/>
<dbReference type="KEGG" id="mmu:76779"/>
<dbReference type="UCSC" id="uc007xzb.1">
    <property type="organism name" value="mouse"/>
</dbReference>
<dbReference type="AGR" id="MGI:1924029"/>
<dbReference type="CTD" id="23059"/>
<dbReference type="MGI" id="MGI:1924029">
    <property type="gene designation" value="Cluap1"/>
</dbReference>
<dbReference type="VEuPathDB" id="HostDB:ENSMUSG00000014232"/>
<dbReference type="eggNOG" id="KOG3647">
    <property type="taxonomic scope" value="Eukaryota"/>
</dbReference>
<dbReference type="GeneTree" id="ENSGT00390000008957"/>
<dbReference type="HOGENOM" id="CLU_034981_1_0_1"/>
<dbReference type="InParanoid" id="Q8R3P7"/>
<dbReference type="OMA" id="RIRPAHM"/>
<dbReference type="OrthoDB" id="438545at2759"/>
<dbReference type="PhylomeDB" id="Q8R3P7"/>
<dbReference type="TreeFam" id="TF314639"/>
<dbReference type="Reactome" id="R-MMU-5620924">
    <property type="pathway name" value="Intraflagellar transport"/>
</dbReference>
<dbReference type="BioGRID-ORCS" id="76779">
    <property type="hits" value="3 hits in 78 CRISPR screens"/>
</dbReference>
<dbReference type="ChiTaRS" id="Cluap1">
    <property type="organism name" value="mouse"/>
</dbReference>
<dbReference type="PRO" id="PR:Q8R3P7"/>
<dbReference type="Proteomes" id="UP000000589">
    <property type="component" value="Chromosome 16"/>
</dbReference>
<dbReference type="RNAct" id="Q8R3P7">
    <property type="molecule type" value="protein"/>
</dbReference>
<dbReference type="Bgee" id="ENSMUSG00000014232">
    <property type="expression patterns" value="Expressed in spermatid and 258 other cell types or tissues"/>
</dbReference>
<dbReference type="ExpressionAtlas" id="Q8R3P7">
    <property type="expression patterns" value="baseline and differential"/>
</dbReference>
<dbReference type="GO" id="GO:0015629">
    <property type="term" value="C:actin cytoskeleton"/>
    <property type="evidence" value="ECO:0007669"/>
    <property type="project" value="Ensembl"/>
</dbReference>
<dbReference type="GO" id="GO:0005813">
    <property type="term" value="C:centrosome"/>
    <property type="evidence" value="ECO:0000314"/>
    <property type="project" value="MGI"/>
</dbReference>
<dbReference type="GO" id="GO:0097546">
    <property type="term" value="C:ciliary base"/>
    <property type="evidence" value="ECO:0000314"/>
    <property type="project" value="MGI"/>
</dbReference>
<dbReference type="GO" id="GO:0097542">
    <property type="term" value="C:ciliary tip"/>
    <property type="evidence" value="ECO:0000314"/>
    <property type="project" value="MGI"/>
</dbReference>
<dbReference type="GO" id="GO:0005929">
    <property type="term" value="C:cilium"/>
    <property type="evidence" value="ECO:0000314"/>
    <property type="project" value="MGI"/>
</dbReference>
<dbReference type="GO" id="GO:0030991">
    <property type="term" value="C:intraciliary transport particle A"/>
    <property type="evidence" value="ECO:0000314"/>
    <property type="project" value="MGI"/>
</dbReference>
<dbReference type="GO" id="GO:0030992">
    <property type="term" value="C:intraciliary transport particle B"/>
    <property type="evidence" value="ECO:0000314"/>
    <property type="project" value="MGI"/>
</dbReference>
<dbReference type="GO" id="GO:0005654">
    <property type="term" value="C:nucleoplasm"/>
    <property type="evidence" value="ECO:0007669"/>
    <property type="project" value="Ensembl"/>
</dbReference>
<dbReference type="GO" id="GO:0035082">
    <property type="term" value="P:axoneme assembly"/>
    <property type="evidence" value="ECO:0000315"/>
    <property type="project" value="MGI"/>
</dbReference>
<dbReference type="GO" id="GO:0060271">
    <property type="term" value="P:cilium assembly"/>
    <property type="evidence" value="ECO:0000315"/>
    <property type="project" value="MGI"/>
</dbReference>
<dbReference type="GO" id="GO:0021508">
    <property type="term" value="P:floor plate formation"/>
    <property type="evidence" value="ECO:0000315"/>
    <property type="project" value="MGI"/>
</dbReference>
<dbReference type="GO" id="GO:0001947">
    <property type="term" value="P:heart looping"/>
    <property type="evidence" value="ECO:0000315"/>
    <property type="project" value="MGI"/>
</dbReference>
<dbReference type="GO" id="GO:0035720">
    <property type="term" value="P:intraciliary anterograde transport"/>
    <property type="evidence" value="ECO:0000303"/>
    <property type="project" value="ComplexPortal"/>
</dbReference>
<dbReference type="GO" id="GO:0042073">
    <property type="term" value="P:intraciliary transport"/>
    <property type="evidence" value="ECO:0000305"/>
    <property type="project" value="MGI"/>
</dbReference>
<dbReference type="GO" id="GO:0060972">
    <property type="term" value="P:left/right pattern formation"/>
    <property type="evidence" value="ECO:0000315"/>
    <property type="project" value="MGI"/>
</dbReference>
<dbReference type="GO" id="GO:0001843">
    <property type="term" value="P:neural tube closure"/>
    <property type="evidence" value="ECO:0000315"/>
    <property type="project" value="MGI"/>
</dbReference>
<dbReference type="GO" id="GO:0007224">
    <property type="term" value="P:smoothened signaling pathway"/>
    <property type="evidence" value="ECO:0000315"/>
    <property type="project" value="MGI"/>
</dbReference>
<dbReference type="InterPro" id="IPR019366">
    <property type="entry name" value="Clusterin-associated_protein-1"/>
</dbReference>
<dbReference type="PANTHER" id="PTHR21547">
    <property type="entry name" value="CLUSTERIN ASSOCIATED PROTEIN 1"/>
    <property type="match status" value="1"/>
</dbReference>
<dbReference type="PANTHER" id="PTHR21547:SF0">
    <property type="entry name" value="CLUSTERIN-ASSOCIATED PROTEIN 1"/>
    <property type="match status" value="1"/>
</dbReference>
<dbReference type="Pfam" id="PF10234">
    <property type="entry name" value="Cluap1"/>
    <property type="match status" value="1"/>
</dbReference>
<evidence type="ECO:0000250" key="1">
    <source>
        <dbReference type="UniProtKB" id="Q96AJ1"/>
    </source>
</evidence>
<evidence type="ECO:0000255" key="2"/>
<evidence type="ECO:0000256" key="3">
    <source>
        <dbReference type="SAM" id="MobiDB-lite"/>
    </source>
</evidence>
<evidence type="ECO:0000269" key="4">
    <source>
    </source>
</evidence>
<evidence type="ECO:0000305" key="5"/>
<evidence type="ECO:0007744" key="6">
    <source>
    </source>
</evidence>
<evidence type="ECO:0007744" key="7">
    <source>
    </source>
</evidence>
<reference key="1">
    <citation type="journal article" date="2005" name="Science">
        <title>The transcriptional landscape of the mammalian genome.</title>
        <authorList>
            <person name="Carninci P."/>
            <person name="Kasukawa T."/>
            <person name="Katayama S."/>
            <person name="Gough J."/>
            <person name="Frith M.C."/>
            <person name="Maeda N."/>
            <person name="Oyama R."/>
            <person name="Ravasi T."/>
            <person name="Lenhard B."/>
            <person name="Wells C."/>
            <person name="Kodzius R."/>
            <person name="Shimokawa K."/>
            <person name="Bajic V.B."/>
            <person name="Brenner S.E."/>
            <person name="Batalov S."/>
            <person name="Forrest A.R."/>
            <person name="Zavolan M."/>
            <person name="Davis M.J."/>
            <person name="Wilming L.G."/>
            <person name="Aidinis V."/>
            <person name="Allen J.E."/>
            <person name="Ambesi-Impiombato A."/>
            <person name="Apweiler R."/>
            <person name="Aturaliya R.N."/>
            <person name="Bailey T.L."/>
            <person name="Bansal M."/>
            <person name="Baxter L."/>
            <person name="Beisel K.W."/>
            <person name="Bersano T."/>
            <person name="Bono H."/>
            <person name="Chalk A.M."/>
            <person name="Chiu K.P."/>
            <person name="Choudhary V."/>
            <person name="Christoffels A."/>
            <person name="Clutterbuck D.R."/>
            <person name="Crowe M.L."/>
            <person name="Dalla E."/>
            <person name="Dalrymple B.P."/>
            <person name="de Bono B."/>
            <person name="Della Gatta G."/>
            <person name="di Bernardo D."/>
            <person name="Down T."/>
            <person name="Engstrom P."/>
            <person name="Fagiolini M."/>
            <person name="Faulkner G."/>
            <person name="Fletcher C.F."/>
            <person name="Fukushima T."/>
            <person name="Furuno M."/>
            <person name="Futaki S."/>
            <person name="Gariboldi M."/>
            <person name="Georgii-Hemming P."/>
            <person name="Gingeras T.R."/>
            <person name="Gojobori T."/>
            <person name="Green R.E."/>
            <person name="Gustincich S."/>
            <person name="Harbers M."/>
            <person name="Hayashi Y."/>
            <person name="Hensch T.K."/>
            <person name="Hirokawa N."/>
            <person name="Hill D."/>
            <person name="Huminiecki L."/>
            <person name="Iacono M."/>
            <person name="Ikeo K."/>
            <person name="Iwama A."/>
            <person name="Ishikawa T."/>
            <person name="Jakt M."/>
            <person name="Kanapin A."/>
            <person name="Katoh M."/>
            <person name="Kawasawa Y."/>
            <person name="Kelso J."/>
            <person name="Kitamura H."/>
            <person name="Kitano H."/>
            <person name="Kollias G."/>
            <person name="Krishnan S.P."/>
            <person name="Kruger A."/>
            <person name="Kummerfeld S.K."/>
            <person name="Kurochkin I.V."/>
            <person name="Lareau L.F."/>
            <person name="Lazarevic D."/>
            <person name="Lipovich L."/>
            <person name="Liu J."/>
            <person name="Liuni S."/>
            <person name="McWilliam S."/>
            <person name="Madan Babu M."/>
            <person name="Madera M."/>
            <person name="Marchionni L."/>
            <person name="Matsuda H."/>
            <person name="Matsuzawa S."/>
            <person name="Miki H."/>
            <person name="Mignone F."/>
            <person name="Miyake S."/>
            <person name="Morris K."/>
            <person name="Mottagui-Tabar S."/>
            <person name="Mulder N."/>
            <person name="Nakano N."/>
            <person name="Nakauchi H."/>
            <person name="Ng P."/>
            <person name="Nilsson R."/>
            <person name="Nishiguchi S."/>
            <person name="Nishikawa S."/>
            <person name="Nori F."/>
            <person name="Ohara O."/>
            <person name="Okazaki Y."/>
            <person name="Orlando V."/>
            <person name="Pang K.C."/>
            <person name="Pavan W.J."/>
            <person name="Pavesi G."/>
            <person name="Pesole G."/>
            <person name="Petrovsky N."/>
            <person name="Piazza S."/>
            <person name="Reed J."/>
            <person name="Reid J.F."/>
            <person name="Ring B.Z."/>
            <person name="Ringwald M."/>
            <person name="Rost B."/>
            <person name="Ruan Y."/>
            <person name="Salzberg S.L."/>
            <person name="Sandelin A."/>
            <person name="Schneider C."/>
            <person name="Schoenbach C."/>
            <person name="Sekiguchi K."/>
            <person name="Semple C.A."/>
            <person name="Seno S."/>
            <person name="Sessa L."/>
            <person name="Sheng Y."/>
            <person name="Shibata Y."/>
            <person name="Shimada H."/>
            <person name="Shimada K."/>
            <person name="Silva D."/>
            <person name="Sinclair B."/>
            <person name="Sperling S."/>
            <person name="Stupka E."/>
            <person name="Sugiura K."/>
            <person name="Sultana R."/>
            <person name="Takenaka Y."/>
            <person name="Taki K."/>
            <person name="Tammoja K."/>
            <person name="Tan S.L."/>
            <person name="Tang S."/>
            <person name="Taylor M.S."/>
            <person name="Tegner J."/>
            <person name="Teichmann S.A."/>
            <person name="Ueda H.R."/>
            <person name="van Nimwegen E."/>
            <person name="Verardo R."/>
            <person name="Wei C.L."/>
            <person name="Yagi K."/>
            <person name="Yamanishi H."/>
            <person name="Zabarovsky E."/>
            <person name="Zhu S."/>
            <person name="Zimmer A."/>
            <person name="Hide W."/>
            <person name="Bult C."/>
            <person name="Grimmond S.M."/>
            <person name="Teasdale R.D."/>
            <person name="Liu E.T."/>
            <person name="Brusic V."/>
            <person name="Quackenbush J."/>
            <person name="Wahlestedt C."/>
            <person name="Mattick J.S."/>
            <person name="Hume D.A."/>
            <person name="Kai C."/>
            <person name="Sasaki D."/>
            <person name="Tomaru Y."/>
            <person name="Fukuda S."/>
            <person name="Kanamori-Katayama M."/>
            <person name="Suzuki M."/>
            <person name="Aoki J."/>
            <person name="Arakawa T."/>
            <person name="Iida J."/>
            <person name="Imamura K."/>
            <person name="Itoh M."/>
            <person name="Kato T."/>
            <person name="Kawaji H."/>
            <person name="Kawagashira N."/>
            <person name="Kawashima T."/>
            <person name="Kojima M."/>
            <person name="Kondo S."/>
            <person name="Konno H."/>
            <person name="Nakano K."/>
            <person name="Ninomiya N."/>
            <person name="Nishio T."/>
            <person name="Okada M."/>
            <person name="Plessy C."/>
            <person name="Shibata K."/>
            <person name="Shiraki T."/>
            <person name="Suzuki S."/>
            <person name="Tagami M."/>
            <person name="Waki K."/>
            <person name="Watahiki A."/>
            <person name="Okamura-Oho Y."/>
            <person name="Suzuki H."/>
            <person name="Kawai J."/>
            <person name="Hayashizaki Y."/>
        </authorList>
    </citation>
    <scope>NUCLEOTIDE SEQUENCE [LARGE SCALE MRNA]</scope>
    <source>
        <strain>C57BL/6J</strain>
        <tissue>Medulla oblongata</tissue>
    </source>
</reference>
<reference key="2">
    <citation type="journal article" date="2004" name="Genome Res.">
        <title>The status, quality, and expansion of the NIH full-length cDNA project: the Mammalian Gene Collection (MGC).</title>
        <authorList>
            <consortium name="The MGC Project Team"/>
        </authorList>
    </citation>
    <scope>NUCLEOTIDE SEQUENCE [LARGE SCALE MRNA]</scope>
    <source>
        <strain>FVB/N</strain>
        <tissue>Jaw</tissue>
        <tissue>Limb</tissue>
        <tissue>Mammary tumor</tissue>
    </source>
</reference>
<reference key="3">
    <citation type="journal article" date="2007" name="Proc. Natl. Acad. Sci. U.S.A.">
        <title>Large-scale phosphorylation analysis of mouse liver.</title>
        <authorList>
            <person name="Villen J."/>
            <person name="Beausoleil S.A."/>
            <person name="Gerber S.A."/>
            <person name="Gygi S.P."/>
        </authorList>
    </citation>
    <scope>PHOSPHORYLATION [LARGE SCALE ANALYSIS] AT SER-409</scope>
    <scope>IDENTIFICATION BY MASS SPECTROMETRY [LARGE SCALE ANALYSIS]</scope>
    <source>
        <tissue>Liver</tissue>
    </source>
</reference>
<reference key="4">
    <citation type="journal article" date="2010" name="Cell">
        <title>A tissue-specific atlas of mouse protein phosphorylation and expression.</title>
        <authorList>
            <person name="Huttlin E.L."/>
            <person name="Jedrychowski M.P."/>
            <person name="Elias J.E."/>
            <person name="Goswami T."/>
            <person name="Rad R."/>
            <person name="Beausoleil S.A."/>
            <person name="Villen J."/>
            <person name="Haas W."/>
            <person name="Sowa M.E."/>
            <person name="Gygi S.P."/>
        </authorList>
    </citation>
    <scope>PHOSPHORYLATION [LARGE SCALE ANALYSIS] AT SER-314; SER-324; SER-326 AND SER-409</scope>
    <scope>IDENTIFICATION BY MASS SPECTROMETRY [LARGE SCALE ANALYSIS]</scope>
    <source>
        <tissue>Kidney</tissue>
        <tissue>Lung</tissue>
        <tissue>Pancreas</tissue>
        <tissue>Testis</tissue>
    </source>
</reference>
<reference key="5">
    <citation type="journal article" date="2012" name="Cilia">
        <title>Mammalian Clusterin associated protein 1 is an evolutionarily conserved protein required for ciliogenesis.</title>
        <authorList>
            <person name="Pasek R.C."/>
            <person name="Berbari N.F."/>
            <person name="Lewis W.R."/>
            <person name="Kesterson R.A."/>
            <person name="Yoder B.K."/>
        </authorList>
    </citation>
    <scope>DISRUPTION PHENOTYPE</scope>
    <scope>FUNCTION</scope>
    <scope>SUBCELLULAR LOCATION</scope>
    <scope>TISSUE SPECIFICITY</scope>
</reference>
<protein>
    <recommendedName>
        <fullName>Clusterin-associated protein 1</fullName>
    </recommendedName>
</protein>
<accession>Q8R3P7</accession>
<accession>Q6P3Y8</accession>
<name>CLUA1_MOUSE</name>
<keyword id="KW-0966">Cell projection</keyword>
<keyword id="KW-0969">Cilium</keyword>
<keyword id="KW-0970">Cilium biogenesis/degradation</keyword>
<keyword id="KW-0175">Coiled coil</keyword>
<keyword id="KW-0539">Nucleus</keyword>
<keyword id="KW-0597">Phosphoprotein</keyword>
<keyword id="KW-1185">Reference proteome</keyword>
<proteinExistence type="evidence at protein level"/>
<gene>
    <name type="primary">Cluap1</name>
</gene>
<organism>
    <name type="scientific">Mus musculus</name>
    <name type="common">Mouse</name>
    <dbReference type="NCBI Taxonomy" id="10090"/>
    <lineage>
        <taxon>Eukaryota</taxon>
        <taxon>Metazoa</taxon>
        <taxon>Chordata</taxon>
        <taxon>Craniata</taxon>
        <taxon>Vertebrata</taxon>
        <taxon>Euteleostomi</taxon>
        <taxon>Mammalia</taxon>
        <taxon>Eutheria</taxon>
        <taxon>Euarchontoglires</taxon>
        <taxon>Glires</taxon>
        <taxon>Rodentia</taxon>
        <taxon>Myomorpha</taxon>
        <taxon>Muroidea</taxon>
        <taxon>Muridae</taxon>
        <taxon>Murinae</taxon>
        <taxon>Mus</taxon>
        <taxon>Mus</taxon>
    </lineage>
</organism>
<sequence length="413" mass="47953">MSFRDLRNFTEMMRALGYPRHISMENFRTPNFGLVSEVLLWLVKRYEPQTDIPSDIETEQDRVFFIKAIAQFMATKAHIKLNTKKLYQADGYAVKELLKITSVLYNAMKTKGMEGSNVGEEDISKFKFDLGSKIADLKAARQLASEITAKGASLYDLLGKEVELRELRTEAIARPLEINETEKVMRIAIKDLLAQVQKTKDLLNNVASDEANLEAKIEKRKLELERNRKRLQTLQSVRPAFMDEYEKVEEDLQKQYDVYLEKFRNLAYLEQQLEDHHRMEQERFEEAENTLRLMQNKLKEEEKRLLKSGSNDDSDIDIQEDDESDSELEDRRMSKPRTAMEVLMQGRPSKRIVGAMQGGDSDEDEDSEDSEIDMEDDEEDDDDLEDESIALSPAKPSRRIRKPEPLDESDNDF</sequence>
<comment type="function">
    <text evidence="4">Required for cilia biogenesis. Appears to function within the multiple intraflagellar transport complex B (IFT-B). Key regulator of hedgehog signaling.</text>
</comment>
<comment type="subunit">
    <text evidence="1">Interacts with CLU/clusterin. Interacts with UBXN10; the interaction is direct.</text>
</comment>
<comment type="subcellular location">
    <subcellularLocation>
        <location evidence="4">Cell projection</location>
        <location evidence="4">Cilium</location>
    </subcellularLocation>
    <subcellularLocation>
        <location evidence="1">Nucleus</location>
    </subcellularLocation>
</comment>
<comment type="tissue specificity">
    <text evidence="4">Expressed in all tissues tested including heart, kidney, skeletal muscle, eye, liver, ovary, oviduct, testes, lung and brain. Elevated levels in multiciliated cells such as the bronchioles of the lungs, ependymal cells of the brain and cells with a single primary cilia of heart and kidney.</text>
</comment>
<comment type="disruption phenotype">
    <text evidence="4">E9.5 embryos are still viable but die thereafter. Mutant embryos are runted, have exhibit enlarged pericardial sacs, and defects in neural tube development. There is a complete absence of cilia in E9.5 embryos. Sonic hedgehog (SHH) signaling is severely disrupted with down-regulation of PTCH1 and GLI1.</text>
</comment>
<comment type="similarity">
    <text evidence="5">Belongs to the CLUAP1 family.</text>
</comment>